<accession>Q2GAJ1</accession>
<feature type="chain" id="PRO_0000258718" description="Large ribosomal subunit protein bL35">
    <location>
        <begin position="1"/>
        <end position="67"/>
    </location>
</feature>
<name>RL35_NOVAD</name>
<keyword id="KW-1185">Reference proteome</keyword>
<keyword id="KW-0687">Ribonucleoprotein</keyword>
<keyword id="KW-0689">Ribosomal protein</keyword>
<gene>
    <name evidence="1" type="primary">rpmI</name>
    <name type="ordered locus">Saro_0685</name>
</gene>
<proteinExistence type="inferred from homology"/>
<reference key="1">
    <citation type="submission" date="2006-01" db="EMBL/GenBank/DDBJ databases">
        <title>Complete sequence of Novosphingobium aromaticivorans DSM 12444.</title>
        <authorList>
            <consortium name="US DOE Joint Genome Institute"/>
            <person name="Copeland A."/>
            <person name="Lucas S."/>
            <person name="Lapidus A."/>
            <person name="Barry K."/>
            <person name="Detter J.C."/>
            <person name="Glavina T."/>
            <person name="Hammon N."/>
            <person name="Israni S."/>
            <person name="Pitluck S."/>
            <person name="Chain P."/>
            <person name="Malfatti S."/>
            <person name="Shin M."/>
            <person name="Vergez L."/>
            <person name="Schmutz J."/>
            <person name="Larimer F."/>
            <person name="Land M."/>
            <person name="Kyrpides N."/>
            <person name="Ivanova N."/>
            <person name="Fredrickson J."/>
            <person name="Balkwill D."/>
            <person name="Romine M.F."/>
            <person name="Richardson P."/>
        </authorList>
    </citation>
    <scope>NUCLEOTIDE SEQUENCE [LARGE SCALE GENOMIC DNA]</scope>
    <source>
        <strain>ATCC 700278 / DSM 12444 / CCUG 56034 / CIP 105152 / NBRC 16084 / F199</strain>
    </source>
</reference>
<comment type="similarity">
    <text evidence="1">Belongs to the bacterial ribosomal protein bL35 family.</text>
</comment>
<dbReference type="EMBL" id="CP000248">
    <property type="protein sequence ID" value="ABD25132.1"/>
    <property type="molecule type" value="Genomic_DNA"/>
</dbReference>
<dbReference type="RefSeq" id="WP_011444346.1">
    <property type="nucleotide sequence ID" value="NC_007794.1"/>
</dbReference>
<dbReference type="SMR" id="Q2GAJ1"/>
<dbReference type="STRING" id="279238.Saro_0685"/>
<dbReference type="KEGG" id="nar:Saro_0685"/>
<dbReference type="eggNOG" id="COG0291">
    <property type="taxonomic scope" value="Bacteria"/>
</dbReference>
<dbReference type="HOGENOM" id="CLU_169643_2_1_5"/>
<dbReference type="Proteomes" id="UP000009134">
    <property type="component" value="Chromosome"/>
</dbReference>
<dbReference type="GO" id="GO:0022625">
    <property type="term" value="C:cytosolic large ribosomal subunit"/>
    <property type="evidence" value="ECO:0007669"/>
    <property type="project" value="TreeGrafter"/>
</dbReference>
<dbReference type="GO" id="GO:0003735">
    <property type="term" value="F:structural constituent of ribosome"/>
    <property type="evidence" value="ECO:0007669"/>
    <property type="project" value="InterPro"/>
</dbReference>
<dbReference type="GO" id="GO:0006412">
    <property type="term" value="P:translation"/>
    <property type="evidence" value="ECO:0007669"/>
    <property type="project" value="UniProtKB-UniRule"/>
</dbReference>
<dbReference type="FunFam" id="4.10.410.60:FF:000001">
    <property type="entry name" value="50S ribosomal protein L35"/>
    <property type="match status" value="1"/>
</dbReference>
<dbReference type="Gene3D" id="4.10.410.60">
    <property type="match status" value="1"/>
</dbReference>
<dbReference type="HAMAP" id="MF_00514">
    <property type="entry name" value="Ribosomal_bL35"/>
    <property type="match status" value="1"/>
</dbReference>
<dbReference type="InterPro" id="IPR001706">
    <property type="entry name" value="Ribosomal_bL35"/>
</dbReference>
<dbReference type="InterPro" id="IPR021137">
    <property type="entry name" value="Ribosomal_bL35-like"/>
</dbReference>
<dbReference type="InterPro" id="IPR018265">
    <property type="entry name" value="Ribosomal_bL35_CS"/>
</dbReference>
<dbReference type="InterPro" id="IPR037229">
    <property type="entry name" value="Ribosomal_bL35_sf"/>
</dbReference>
<dbReference type="NCBIfam" id="TIGR00001">
    <property type="entry name" value="rpmI_bact"/>
    <property type="match status" value="1"/>
</dbReference>
<dbReference type="PANTHER" id="PTHR33343">
    <property type="entry name" value="54S RIBOSOMAL PROTEIN BL35M"/>
    <property type="match status" value="1"/>
</dbReference>
<dbReference type="PANTHER" id="PTHR33343:SF1">
    <property type="entry name" value="LARGE RIBOSOMAL SUBUNIT PROTEIN BL35M"/>
    <property type="match status" value="1"/>
</dbReference>
<dbReference type="Pfam" id="PF01632">
    <property type="entry name" value="Ribosomal_L35p"/>
    <property type="match status" value="1"/>
</dbReference>
<dbReference type="PRINTS" id="PR00064">
    <property type="entry name" value="RIBOSOMALL35"/>
</dbReference>
<dbReference type="SUPFAM" id="SSF143034">
    <property type="entry name" value="L35p-like"/>
    <property type="match status" value="1"/>
</dbReference>
<dbReference type="PROSITE" id="PS00936">
    <property type="entry name" value="RIBOSOMAL_L35"/>
    <property type="match status" value="1"/>
</dbReference>
<organism>
    <name type="scientific">Novosphingobium aromaticivorans (strain ATCC 700278 / DSM 12444 / CCUG 56034 / CIP 105152 / NBRC 16084 / F199)</name>
    <dbReference type="NCBI Taxonomy" id="279238"/>
    <lineage>
        <taxon>Bacteria</taxon>
        <taxon>Pseudomonadati</taxon>
        <taxon>Pseudomonadota</taxon>
        <taxon>Alphaproteobacteria</taxon>
        <taxon>Sphingomonadales</taxon>
        <taxon>Sphingomonadaceae</taxon>
        <taxon>Novosphingobium</taxon>
    </lineage>
</organism>
<evidence type="ECO:0000255" key="1">
    <source>
        <dbReference type="HAMAP-Rule" id="MF_00514"/>
    </source>
</evidence>
<evidence type="ECO:0000305" key="2"/>
<sequence>MPKLKTKSGVKKRFKLTASGKVKHGVAGKRHRLISHNAKYIRQNRGTEVISDADAKVIKKWAPYGLN</sequence>
<protein>
    <recommendedName>
        <fullName evidence="1">Large ribosomal subunit protein bL35</fullName>
    </recommendedName>
    <alternativeName>
        <fullName evidence="2">50S ribosomal protein L35</fullName>
    </alternativeName>
</protein>